<proteinExistence type="evidence at transcript level"/>
<protein>
    <recommendedName>
        <fullName>Transforming protein RhoA</fullName>
        <ecNumber>3.6.5.2</ecNumber>
    </recommendedName>
</protein>
<organism>
    <name type="scientific">Pongo abelii</name>
    <name type="common">Sumatran orangutan</name>
    <name type="synonym">Pongo pygmaeus abelii</name>
    <dbReference type="NCBI Taxonomy" id="9601"/>
    <lineage>
        <taxon>Eukaryota</taxon>
        <taxon>Metazoa</taxon>
        <taxon>Chordata</taxon>
        <taxon>Craniata</taxon>
        <taxon>Vertebrata</taxon>
        <taxon>Euteleostomi</taxon>
        <taxon>Mammalia</taxon>
        <taxon>Eutheria</taxon>
        <taxon>Euarchontoglires</taxon>
        <taxon>Primates</taxon>
        <taxon>Haplorrhini</taxon>
        <taxon>Catarrhini</taxon>
        <taxon>Hominidae</taxon>
        <taxon>Pongo</taxon>
    </lineage>
</organism>
<accession>Q5REY6</accession>
<name>RHOA_PONAB</name>
<dbReference type="EC" id="3.6.5.2"/>
<dbReference type="EMBL" id="CR857377">
    <property type="protein sequence ID" value="CAH89671.1"/>
    <property type="molecule type" value="mRNA"/>
</dbReference>
<dbReference type="RefSeq" id="NP_001124755.1">
    <property type="nucleotide sequence ID" value="NM_001131283.1"/>
</dbReference>
<dbReference type="BMRB" id="Q5REY6"/>
<dbReference type="SMR" id="Q5REY6"/>
<dbReference type="FunCoup" id="Q5REY6">
    <property type="interactions" value="3025"/>
</dbReference>
<dbReference type="STRING" id="9601.ENSPPYP00000015522"/>
<dbReference type="Ensembl" id="ENSPPYT00000053963.1">
    <property type="protein sequence ID" value="ENSPPYP00000039086.1"/>
    <property type="gene ID" value="ENSPPYG00000013873.2"/>
</dbReference>
<dbReference type="GeneID" id="100171605"/>
<dbReference type="KEGG" id="pon:100171605"/>
<dbReference type="CTD" id="387"/>
<dbReference type="GeneTree" id="ENSGT00950000182945"/>
<dbReference type="InParanoid" id="Q5REY6"/>
<dbReference type="OMA" id="EVNHYIP"/>
<dbReference type="OrthoDB" id="8830751at2759"/>
<dbReference type="Proteomes" id="UP000001595">
    <property type="component" value="Chromosome 3"/>
</dbReference>
<dbReference type="GO" id="GO:0043296">
    <property type="term" value="C:apical junction complex"/>
    <property type="evidence" value="ECO:0000250"/>
    <property type="project" value="UniProtKB"/>
</dbReference>
<dbReference type="GO" id="GO:0005938">
    <property type="term" value="C:cell cortex"/>
    <property type="evidence" value="ECO:0000250"/>
    <property type="project" value="UniProtKB"/>
</dbReference>
<dbReference type="GO" id="GO:0032154">
    <property type="term" value="C:cleavage furrow"/>
    <property type="evidence" value="ECO:0007669"/>
    <property type="project" value="UniProtKB-SubCell"/>
</dbReference>
<dbReference type="GO" id="GO:0009898">
    <property type="term" value="C:cytoplasmic side of plasma membrane"/>
    <property type="evidence" value="ECO:0000250"/>
    <property type="project" value="UniProtKB"/>
</dbReference>
<dbReference type="GO" id="GO:0005856">
    <property type="term" value="C:cytoskeleton"/>
    <property type="evidence" value="ECO:0007669"/>
    <property type="project" value="UniProtKB-SubCell"/>
</dbReference>
<dbReference type="GO" id="GO:0005829">
    <property type="term" value="C:cytosol"/>
    <property type="evidence" value="ECO:0000250"/>
    <property type="project" value="UniProtKB"/>
</dbReference>
<dbReference type="GO" id="GO:0030425">
    <property type="term" value="C:dendrite"/>
    <property type="evidence" value="ECO:0007669"/>
    <property type="project" value="UniProtKB-SubCell"/>
</dbReference>
<dbReference type="GO" id="GO:0005768">
    <property type="term" value="C:endosome"/>
    <property type="evidence" value="ECO:0007669"/>
    <property type="project" value="Ensembl"/>
</dbReference>
<dbReference type="GO" id="GO:0098978">
    <property type="term" value="C:glutamatergic synapse"/>
    <property type="evidence" value="ECO:0007669"/>
    <property type="project" value="Ensembl"/>
</dbReference>
<dbReference type="GO" id="GO:0030027">
    <property type="term" value="C:lamellipodium"/>
    <property type="evidence" value="ECO:0000250"/>
    <property type="project" value="UniProtKB"/>
</dbReference>
<dbReference type="GO" id="GO:0030496">
    <property type="term" value="C:midbody"/>
    <property type="evidence" value="ECO:0007669"/>
    <property type="project" value="UniProtKB-SubCell"/>
</dbReference>
<dbReference type="GO" id="GO:0005634">
    <property type="term" value="C:nucleus"/>
    <property type="evidence" value="ECO:0007669"/>
    <property type="project" value="UniProtKB-SubCell"/>
</dbReference>
<dbReference type="GO" id="GO:0098794">
    <property type="term" value="C:postsynapse"/>
    <property type="evidence" value="ECO:0007669"/>
    <property type="project" value="Ensembl"/>
</dbReference>
<dbReference type="GO" id="GO:0032587">
    <property type="term" value="C:ruffle membrane"/>
    <property type="evidence" value="ECO:0007669"/>
    <property type="project" value="Ensembl"/>
</dbReference>
<dbReference type="GO" id="GO:0003925">
    <property type="term" value="F:G protein activity"/>
    <property type="evidence" value="ECO:0007669"/>
    <property type="project" value="UniProtKB-EC"/>
</dbReference>
<dbReference type="GO" id="GO:0005525">
    <property type="term" value="F:GTP binding"/>
    <property type="evidence" value="ECO:0000250"/>
    <property type="project" value="UniProtKB"/>
</dbReference>
<dbReference type="GO" id="GO:0003924">
    <property type="term" value="F:GTPase activity"/>
    <property type="evidence" value="ECO:0000250"/>
    <property type="project" value="UniProtKB"/>
</dbReference>
<dbReference type="GO" id="GO:0017022">
    <property type="term" value="F:myosin binding"/>
    <property type="evidence" value="ECO:0007669"/>
    <property type="project" value="Ensembl"/>
</dbReference>
<dbReference type="GO" id="GO:0030036">
    <property type="term" value="P:actin cytoskeleton organization"/>
    <property type="evidence" value="ECO:0000250"/>
    <property type="project" value="UniProtKB"/>
</dbReference>
<dbReference type="GO" id="GO:0002363">
    <property type="term" value="P:alpha-beta T cell lineage commitment"/>
    <property type="evidence" value="ECO:0007669"/>
    <property type="project" value="Ensembl"/>
</dbReference>
<dbReference type="GO" id="GO:0030521">
    <property type="term" value="P:androgen receptor signaling pathway"/>
    <property type="evidence" value="ECO:0007669"/>
    <property type="project" value="Ensembl"/>
</dbReference>
<dbReference type="GO" id="GO:0001998">
    <property type="term" value="P:angiotensin-mediated vasoconstriction involved in regulation of systemic arterial blood pressure"/>
    <property type="evidence" value="ECO:0007669"/>
    <property type="project" value="Ensembl"/>
</dbReference>
<dbReference type="GO" id="GO:0003189">
    <property type="term" value="P:aortic valve formation"/>
    <property type="evidence" value="ECO:0007669"/>
    <property type="project" value="Ensembl"/>
</dbReference>
<dbReference type="GO" id="GO:0043297">
    <property type="term" value="P:apical junction assembly"/>
    <property type="evidence" value="ECO:0000250"/>
    <property type="project" value="UniProtKB"/>
</dbReference>
<dbReference type="GO" id="GO:0038027">
    <property type="term" value="P:apolipoprotein A-I-mediated signaling pathway"/>
    <property type="evidence" value="ECO:0007669"/>
    <property type="project" value="Ensembl"/>
</dbReference>
<dbReference type="GO" id="GO:0043366">
    <property type="term" value="P:beta selection"/>
    <property type="evidence" value="ECO:0007669"/>
    <property type="project" value="Ensembl"/>
</dbReference>
<dbReference type="GO" id="GO:0061430">
    <property type="term" value="P:bone trabecula morphogenesis"/>
    <property type="evidence" value="ECO:0007669"/>
    <property type="project" value="Ensembl"/>
</dbReference>
<dbReference type="GO" id="GO:0034329">
    <property type="term" value="P:cell junction assembly"/>
    <property type="evidence" value="ECO:0000250"/>
    <property type="project" value="UniProtKB"/>
</dbReference>
<dbReference type="GO" id="GO:0016477">
    <property type="term" value="P:cell migration"/>
    <property type="evidence" value="ECO:0000250"/>
    <property type="project" value="UniProtKB"/>
</dbReference>
<dbReference type="GO" id="GO:0000902">
    <property type="term" value="P:cell morphogenesis"/>
    <property type="evidence" value="ECO:0007669"/>
    <property type="project" value="Ensembl"/>
</dbReference>
<dbReference type="GO" id="GO:0007160">
    <property type="term" value="P:cell-matrix adhesion"/>
    <property type="evidence" value="ECO:0007669"/>
    <property type="project" value="Ensembl"/>
</dbReference>
<dbReference type="GO" id="GO:1990869">
    <property type="term" value="P:cellular response to chemokine"/>
    <property type="evidence" value="ECO:0000250"/>
    <property type="project" value="UniProtKB"/>
</dbReference>
<dbReference type="GO" id="GO:0071222">
    <property type="term" value="P:cellular response to lipopolysaccharide"/>
    <property type="evidence" value="ECO:0007669"/>
    <property type="project" value="Ensembl"/>
</dbReference>
<dbReference type="GO" id="GO:0021795">
    <property type="term" value="P:cerebral cortex cell migration"/>
    <property type="evidence" value="ECO:0007669"/>
    <property type="project" value="Ensembl"/>
</dbReference>
<dbReference type="GO" id="GO:0036089">
    <property type="term" value="P:cleavage furrow formation"/>
    <property type="evidence" value="ECO:0000250"/>
    <property type="project" value="UniProtKB"/>
</dbReference>
<dbReference type="GO" id="GO:0031122">
    <property type="term" value="P:cytoplasmic microtubule organization"/>
    <property type="evidence" value="ECO:0000250"/>
    <property type="project" value="UniProtKB"/>
</dbReference>
<dbReference type="GO" id="GO:0043542">
    <property type="term" value="P:endothelial cell migration"/>
    <property type="evidence" value="ECO:0007669"/>
    <property type="project" value="Ensembl"/>
</dbReference>
<dbReference type="GO" id="GO:0097498">
    <property type="term" value="P:endothelial tube lumen extension"/>
    <property type="evidence" value="ECO:0007669"/>
    <property type="project" value="Ensembl"/>
</dbReference>
<dbReference type="GO" id="GO:0045198">
    <property type="term" value="P:establishment of epithelial cell apical/basal polarity"/>
    <property type="evidence" value="ECO:0000250"/>
    <property type="project" value="UniProtKB"/>
</dbReference>
<dbReference type="GO" id="GO:0021861">
    <property type="term" value="P:forebrain radial glial cell differentiation"/>
    <property type="evidence" value="ECO:0007669"/>
    <property type="project" value="Ensembl"/>
</dbReference>
<dbReference type="GO" id="GO:0001822">
    <property type="term" value="P:kidney development"/>
    <property type="evidence" value="ECO:0007669"/>
    <property type="project" value="Ensembl"/>
</dbReference>
<dbReference type="GO" id="GO:1903673">
    <property type="term" value="P:mitotic cleavage furrow formation"/>
    <property type="evidence" value="ECO:0000250"/>
    <property type="project" value="UniProtKB"/>
</dbReference>
<dbReference type="GO" id="GO:0090307">
    <property type="term" value="P:mitotic spindle assembly"/>
    <property type="evidence" value="ECO:0007669"/>
    <property type="project" value="Ensembl"/>
</dbReference>
<dbReference type="GO" id="GO:0097049">
    <property type="term" value="P:motor neuron apoptotic process"/>
    <property type="evidence" value="ECO:0007669"/>
    <property type="project" value="Ensembl"/>
</dbReference>
<dbReference type="GO" id="GO:0050919">
    <property type="term" value="P:negative chemotaxis"/>
    <property type="evidence" value="ECO:0007669"/>
    <property type="project" value="Ensembl"/>
</dbReference>
<dbReference type="GO" id="GO:0090051">
    <property type="term" value="P:negative regulation of cell migration involved in sprouting angiogenesis"/>
    <property type="evidence" value="ECO:0007669"/>
    <property type="project" value="Ensembl"/>
</dbReference>
<dbReference type="GO" id="GO:0045792">
    <property type="term" value="P:negative regulation of cell size"/>
    <property type="evidence" value="ECO:0007669"/>
    <property type="project" value="Ensembl"/>
</dbReference>
<dbReference type="GO" id="GO:0010812">
    <property type="term" value="P:negative regulation of cell-substrate adhesion"/>
    <property type="evidence" value="ECO:0007669"/>
    <property type="project" value="Ensembl"/>
</dbReference>
<dbReference type="GO" id="GO:0033144">
    <property type="term" value="P:negative regulation of intracellular steroid hormone receptor signaling pathway"/>
    <property type="evidence" value="ECO:0007669"/>
    <property type="project" value="Ensembl"/>
</dbReference>
<dbReference type="GO" id="GO:2000672">
    <property type="term" value="P:negative regulation of motor neuron apoptotic process"/>
    <property type="evidence" value="ECO:0007669"/>
    <property type="project" value="Ensembl"/>
</dbReference>
<dbReference type="GO" id="GO:0090324">
    <property type="term" value="P:negative regulation of oxidative phosphorylation"/>
    <property type="evidence" value="ECO:0007669"/>
    <property type="project" value="Ensembl"/>
</dbReference>
<dbReference type="GO" id="GO:1903427">
    <property type="term" value="P:negative regulation of reactive oxygen species biosynthetic process"/>
    <property type="evidence" value="ECO:0007669"/>
    <property type="project" value="Ensembl"/>
</dbReference>
<dbReference type="GO" id="GO:0001764">
    <property type="term" value="P:neuron migration"/>
    <property type="evidence" value="ECO:0007669"/>
    <property type="project" value="Ensembl"/>
</dbReference>
<dbReference type="GO" id="GO:0042476">
    <property type="term" value="P:odontogenesis"/>
    <property type="evidence" value="ECO:0007669"/>
    <property type="project" value="Ensembl"/>
</dbReference>
<dbReference type="GO" id="GO:0043931">
    <property type="term" value="P:ossification involved in bone maturation"/>
    <property type="evidence" value="ECO:0007669"/>
    <property type="project" value="Ensembl"/>
</dbReference>
<dbReference type="GO" id="GO:0046638">
    <property type="term" value="P:positive regulation of alpha-beta T cell differentiation"/>
    <property type="evidence" value="ECO:0007669"/>
    <property type="project" value="Ensembl"/>
</dbReference>
<dbReference type="GO" id="GO:0043123">
    <property type="term" value="P:positive regulation of canonical NF-kappaB signal transduction"/>
    <property type="evidence" value="ECO:0007669"/>
    <property type="project" value="Ensembl"/>
</dbReference>
<dbReference type="GO" id="GO:0032467">
    <property type="term" value="P:positive regulation of cytokinesis"/>
    <property type="evidence" value="ECO:0000250"/>
    <property type="project" value="UniProtKB"/>
</dbReference>
<dbReference type="GO" id="GO:1904996">
    <property type="term" value="P:positive regulation of leukocyte adhesion to vascular endothelial cell"/>
    <property type="evidence" value="ECO:0007669"/>
    <property type="project" value="Ensembl"/>
</dbReference>
<dbReference type="GO" id="GO:0045666">
    <property type="term" value="P:positive regulation of neuron differentiation"/>
    <property type="evidence" value="ECO:0007669"/>
    <property type="project" value="Ensembl"/>
</dbReference>
<dbReference type="GO" id="GO:0071803">
    <property type="term" value="P:positive regulation of podosome assembly"/>
    <property type="evidence" value="ECO:0007669"/>
    <property type="project" value="Ensembl"/>
</dbReference>
<dbReference type="GO" id="GO:0071902">
    <property type="term" value="P:positive regulation of protein serine/threonine kinase activity"/>
    <property type="evidence" value="ECO:0000250"/>
    <property type="project" value="UniProtKB"/>
</dbReference>
<dbReference type="GO" id="GO:0051496">
    <property type="term" value="P:positive regulation of stress fiber assembly"/>
    <property type="evidence" value="ECO:0007669"/>
    <property type="project" value="Ensembl"/>
</dbReference>
<dbReference type="GO" id="GO:2000406">
    <property type="term" value="P:positive regulation of T cell migration"/>
    <property type="evidence" value="ECO:0000250"/>
    <property type="project" value="UniProtKB"/>
</dbReference>
<dbReference type="GO" id="GO:1904695">
    <property type="term" value="P:positive regulation of vascular associated smooth muscle contraction"/>
    <property type="evidence" value="ECO:0007669"/>
    <property type="project" value="Ensembl"/>
</dbReference>
<dbReference type="GO" id="GO:0030334">
    <property type="term" value="P:regulation of cell migration"/>
    <property type="evidence" value="ECO:0000250"/>
    <property type="project" value="UniProtKB"/>
</dbReference>
<dbReference type="GO" id="GO:0070507">
    <property type="term" value="P:regulation of microtubule cytoskeleton organization"/>
    <property type="evidence" value="ECO:0007669"/>
    <property type="project" value="Ensembl"/>
</dbReference>
<dbReference type="GO" id="GO:1905274">
    <property type="term" value="P:regulation of modification of postsynaptic actin cytoskeleton"/>
    <property type="evidence" value="ECO:0007669"/>
    <property type="project" value="Ensembl"/>
</dbReference>
<dbReference type="GO" id="GO:2000177">
    <property type="term" value="P:regulation of neural precursor cell proliferation"/>
    <property type="evidence" value="ECO:0007669"/>
    <property type="project" value="Ensembl"/>
</dbReference>
<dbReference type="GO" id="GO:0010975">
    <property type="term" value="P:regulation of neuron projection development"/>
    <property type="evidence" value="ECO:0007669"/>
    <property type="project" value="Ensembl"/>
</dbReference>
<dbReference type="GO" id="GO:0033688">
    <property type="term" value="P:regulation of osteoblast proliferation"/>
    <property type="evidence" value="ECO:0007669"/>
    <property type="project" value="Ensembl"/>
</dbReference>
<dbReference type="GO" id="GO:0003100">
    <property type="term" value="P:regulation of systemic arterial blood pressure by endothelin"/>
    <property type="evidence" value="ECO:0007669"/>
    <property type="project" value="Ensembl"/>
</dbReference>
<dbReference type="GO" id="GO:0006357">
    <property type="term" value="P:regulation of transcription by RNA polymerase II"/>
    <property type="evidence" value="ECO:0007669"/>
    <property type="project" value="Ensembl"/>
</dbReference>
<dbReference type="GO" id="GO:0007266">
    <property type="term" value="P:Rho protein signal transduction"/>
    <property type="evidence" value="ECO:0000250"/>
    <property type="project" value="UniProtKB"/>
</dbReference>
<dbReference type="GO" id="GO:0035385">
    <property type="term" value="P:Roundabout signaling pathway"/>
    <property type="evidence" value="ECO:0000250"/>
    <property type="project" value="UniProtKB"/>
</dbReference>
<dbReference type="GO" id="GO:0071526">
    <property type="term" value="P:semaphorin-plexin signaling pathway"/>
    <property type="evidence" value="ECO:0007669"/>
    <property type="project" value="Ensembl"/>
</dbReference>
<dbReference type="GO" id="GO:1902766">
    <property type="term" value="P:skeletal muscle satellite cell migration"/>
    <property type="evidence" value="ECO:0000250"/>
    <property type="project" value="AgBase"/>
</dbReference>
<dbReference type="GO" id="GO:0007519">
    <property type="term" value="P:skeletal muscle tissue development"/>
    <property type="evidence" value="ECO:0007669"/>
    <property type="project" value="Ensembl"/>
</dbReference>
<dbReference type="GO" id="GO:0043149">
    <property type="term" value="P:stress fiber assembly"/>
    <property type="evidence" value="ECO:0000250"/>
    <property type="project" value="UniProtKB"/>
</dbReference>
<dbReference type="GO" id="GO:0034446">
    <property type="term" value="P:substrate adhesion-dependent cell spreading"/>
    <property type="evidence" value="ECO:0000250"/>
    <property type="project" value="UniProtKB"/>
</dbReference>
<dbReference type="GO" id="GO:0044319">
    <property type="term" value="P:wound healing, spreading of cells"/>
    <property type="evidence" value="ECO:0000250"/>
    <property type="project" value="AgBase"/>
</dbReference>
<dbReference type="CDD" id="cd01870">
    <property type="entry name" value="RhoA_like"/>
    <property type="match status" value="1"/>
</dbReference>
<dbReference type="FunFam" id="3.40.50.300:FF:000095">
    <property type="entry name" value="Rho-related GTP-binding protein RhoC"/>
    <property type="match status" value="1"/>
</dbReference>
<dbReference type="Gene3D" id="3.40.50.300">
    <property type="entry name" value="P-loop containing nucleotide triphosphate hydrolases"/>
    <property type="match status" value="1"/>
</dbReference>
<dbReference type="InterPro" id="IPR027417">
    <property type="entry name" value="P-loop_NTPase"/>
</dbReference>
<dbReference type="InterPro" id="IPR005225">
    <property type="entry name" value="Small_GTP-bd"/>
</dbReference>
<dbReference type="InterPro" id="IPR001806">
    <property type="entry name" value="Small_GTPase"/>
</dbReference>
<dbReference type="InterPro" id="IPR003578">
    <property type="entry name" value="Small_GTPase_Rho"/>
</dbReference>
<dbReference type="NCBIfam" id="TIGR00231">
    <property type="entry name" value="small_GTP"/>
    <property type="match status" value="1"/>
</dbReference>
<dbReference type="PANTHER" id="PTHR24072">
    <property type="entry name" value="RHO FAMILY GTPASE"/>
    <property type="match status" value="1"/>
</dbReference>
<dbReference type="Pfam" id="PF00071">
    <property type="entry name" value="Ras"/>
    <property type="match status" value="1"/>
</dbReference>
<dbReference type="PRINTS" id="PR00449">
    <property type="entry name" value="RASTRNSFRMNG"/>
</dbReference>
<dbReference type="SMART" id="SM00175">
    <property type="entry name" value="RAB"/>
    <property type="match status" value="1"/>
</dbReference>
<dbReference type="SMART" id="SM00173">
    <property type="entry name" value="RAS"/>
    <property type="match status" value="1"/>
</dbReference>
<dbReference type="SMART" id="SM00174">
    <property type="entry name" value="RHO"/>
    <property type="match status" value="1"/>
</dbReference>
<dbReference type="SUPFAM" id="SSF52540">
    <property type="entry name" value="P-loop containing nucleoside triphosphate hydrolases"/>
    <property type="match status" value="1"/>
</dbReference>
<dbReference type="PROSITE" id="PS51420">
    <property type="entry name" value="RHO"/>
    <property type="match status" value="1"/>
</dbReference>
<keyword id="KW-0131">Cell cycle</keyword>
<keyword id="KW-0132">Cell division</keyword>
<keyword id="KW-1003">Cell membrane</keyword>
<keyword id="KW-0966">Cell projection</keyword>
<keyword id="KW-0963">Cytoplasm</keyword>
<keyword id="KW-0206">Cytoskeleton</keyword>
<keyword id="KW-0342">GTP-binding</keyword>
<keyword id="KW-0378">Hydrolase</keyword>
<keyword id="KW-1017">Isopeptide bond</keyword>
<keyword id="KW-0449">Lipoprotein</keyword>
<keyword id="KW-0472">Membrane</keyword>
<keyword id="KW-0488">Methylation</keyword>
<keyword id="KW-0547">Nucleotide-binding</keyword>
<keyword id="KW-0539">Nucleus</keyword>
<keyword id="KW-0597">Phosphoprotein</keyword>
<keyword id="KW-0636">Prenylation</keyword>
<keyword id="KW-0656">Proto-oncogene</keyword>
<keyword id="KW-1185">Reference proteome</keyword>
<keyword id="KW-0832">Ubl conjugation</keyword>
<evidence type="ECO:0000250" key="1">
    <source>
        <dbReference type="UniProtKB" id="P61585"/>
    </source>
</evidence>
<evidence type="ECO:0000250" key="2">
    <source>
        <dbReference type="UniProtKB" id="P61586"/>
    </source>
</evidence>
<evidence type="ECO:0000250" key="3">
    <source>
        <dbReference type="UniProtKB" id="P61589"/>
    </source>
</evidence>
<evidence type="ECO:0000250" key="4">
    <source>
        <dbReference type="UniProtKB" id="P62820"/>
    </source>
</evidence>
<evidence type="ECO:0000250" key="5">
    <source>
        <dbReference type="UniProtKB" id="Q9QUI0"/>
    </source>
</evidence>
<evidence type="ECO:0000255" key="6"/>
<evidence type="ECO:0000305" key="7"/>
<reference key="1">
    <citation type="submission" date="2004-11" db="EMBL/GenBank/DDBJ databases">
        <authorList>
            <consortium name="The German cDNA consortium"/>
        </authorList>
    </citation>
    <scope>NUCLEOTIDE SEQUENCE [LARGE SCALE MRNA]</scope>
    <source>
        <tissue>Kidney</tissue>
    </source>
</reference>
<feature type="chain" id="PRO_0000292954" description="Transforming protein RhoA">
    <location>
        <begin position="1"/>
        <end position="190"/>
    </location>
</feature>
<feature type="propeptide" id="PRO_0000290013" description="Removed in mature form" evidence="1">
    <location>
        <begin position="191"/>
        <end position="193"/>
    </location>
</feature>
<feature type="region of interest" description="Switch II region; involved in RAP1GDS1 binding" evidence="2">
    <location>
        <begin position="61"/>
        <end position="78"/>
    </location>
</feature>
<feature type="short sequence motif" description="Effector region" evidence="6">
    <location>
        <begin position="34"/>
        <end position="42"/>
    </location>
</feature>
<feature type="binding site" evidence="2">
    <location>
        <begin position="12"/>
        <end position="19"/>
    </location>
    <ligand>
        <name>GTP</name>
        <dbReference type="ChEBI" id="CHEBI:37565"/>
    </ligand>
</feature>
<feature type="binding site" evidence="4">
    <location>
        <begin position="30"/>
        <end position="37"/>
    </location>
    <ligand>
        <name>GTP</name>
        <dbReference type="ChEBI" id="CHEBI:37565"/>
    </ligand>
</feature>
<feature type="binding site" evidence="4">
    <location>
        <begin position="59"/>
        <end position="63"/>
    </location>
    <ligand>
        <name>GTP</name>
        <dbReference type="ChEBI" id="CHEBI:37565"/>
    </ligand>
</feature>
<feature type="binding site" evidence="2">
    <location>
        <begin position="117"/>
        <end position="120"/>
    </location>
    <ligand>
        <name>GTP</name>
        <dbReference type="ChEBI" id="CHEBI:37565"/>
    </ligand>
</feature>
<feature type="binding site" evidence="4">
    <location>
        <begin position="160"/>
        <end position="162"/>
    </location>
    <ligand>
        <name>GTP</name>
        <dbReference type="ChEBI" id="CHEBI:37565"/>
    </ligand>
</feature>
<feature type="modified residue" description="5-glutamyl serotonin" evidence="5">
    <location>
        <position position="63"/>
    </location>
</feature>
<feature type="modified residue" description="Phosphoserine; by PKG/PRKG1" evidence="3">
    <location>
        <position position="188"/>
    </location>
</feature>
<feature type="modified residue" description="Cysteine methyl ester" evidence="1">
    <location>
        <position position="190"/>
    </location>
</feature>
<feature type="lipid moiety-binding region" description="S-geranylgeranyl cysteine" evidence="1">
    <location>
        <position position="190"/>
    </location>
</feature>
<feature type="cross-link" description="Glycyl lysine isopeptide (Lys-Gly) (interchain with G-Cter in ubiquitin)" evidence="2">
    <location>
        <position position="135"/>
    </location>
</feature>
<feature type="sequence conflict" description="In Ref. 1; CAH89671." evidence="7" ref="1">
    <original>C</original>
    <variation>R</variation>
    <location>
        <position position="190"/>
    </location>
</feature>
<gene>
    <name type="primary">RHOA</name>
</gene>
<comment type="function">
    <text evidence="2 3 5">Small GTPase which cycles between an active GTP-bound and an inactive GDP-bound state. Mainly associated with cytoskeleton organization, in active state binds to a variety of effector proteins to regulate cellular responses such as cytoskeletal dynamics, cell migration and cell cycle. Regulates a signal transduction pathway linking plasma membrane receptors to the assembly of focal adhesions and actin stress fibers. Involved in a microtubule-dependent signal that is required for the myosin contractile ring formation during cell cycle cytokinesis. Plays an essential role in cleavage furrow formation. Required for the apical junction formation of keratinocyte cell-cell adhesion. Essential for the SPATA13-mediated regulation of cell migration and adhesion assembly and disassembly. The MEMO1-RHOA-DIAPH1 signaling pathway plays an important role in ERBB2-dependent stabilization of microtubules at the cell cortex. It controls the localization of APC and CLASP2 to the cell membrane, via the regulation of GSK3B activity. In turn, membrane-bound APC allows the localization of the MACF1 to the cell membrane, which is required for microtubule capture and stabilization. Regulates KCNA2 potassium channel activity by reducing its location at the cell surface in response to CHRM1 activation; promotes KCNA2 endocytosis. Acts as an allosteric activator of guanine nucleotide exchange factor ECT2 by binding in its activated GTP-bound form to the PH domain of ECT2 which stimulates the release of PH inhibition and promotes the binding of substrate RHOA to the ECT2 catalytic center. May be an activator of PLCE1. In neurons, involved in the inhibition of the initial spine growth. Upon activation by CaMKII, modulates dendritic spine structural plasticity by relaying CaMKII transient activation to synapse-specific, long-term signaling. Acts as a regulator of platelet alpha-granule release during activation and aggregation of platelets (By similarity). When activated by DAAM1 may signal centrosome maturation and chromosomal segregation during cell division. May also be involved in contractile ring formation during cytokinesis.</text>
</comment>
<comment type="catalytic activity">
    <reaction evidence="2">
        <text>GTP + H2O = GDP + phosphate + H(+)</text>
        <dbReference type="Rhea" id="RHEA:19669"/>
        <dbReference type="ChEBI" id="CHEBI:15377"/>
        <dbReference type="ChEBI" id="CHEBI:15378"/>
        <dbReference type="ChEBI" id="CHEBI:37565"/>
        <dbReference type="ChEBI" id="CHEBI:43474"/>
        <dbReference type="ChEBI" id="CHEBI:58189"/>
        <dbReference type="EC" id="3.6.5.2"/>
    </reaction>
    <physiologicalReaction direction="left-to-right" evidence="2">
        <dbReference type="Rhea" id="RHEA:19670"/>
    </physiologicalReaction>
</comment>
<comment type="activity regulation">
    <text evidence="2">Regulated by guanine nucleotide exchange factors (GEFs) which promote the exchange of bound GDP for free GTP, GTPase activating proteins (GAPs) which increase the GTP hydrolysis activity and GDP dissociation inhibitors which inhibit the dissociation of the nucleotide from the GTPase. Activated by GEFs such as ARHGEF2, ARHGEF3, ARHGEF28 and BCR. Inhibited by GAPs such as ARHGAP30. Inhibited by GDP dissociation inhibitors such as ARHGDIA.</text>
</comment>
<comment type="subunit">
    <text evidence="2 5">Interacts with ARHGEF28 (By similarity). Interacts (via GTP-bound form) with RIPOR1 (via N-terminus); this interaction links RHOA to STK24 and STK26 kinases. Interacts with RIPOR2 (via active GTP- or inactive GDP-bound forms) isoform 1 and isoform 2; these interactions are direct, block the loading of GTP to RHOA and decrease upon chemokine CCL19 stimulation in primary T lymphocytes. Binds PRKCL1, ROCK1 and ROCK2. Interacts with ARHGEF2, ARHGEF3, NET1 and RTKN. Interacts with PLCE1 and AKAP13. Interacts with DIAPH1. Interacts (in the constitutively activated, GTP-bound form) with DGKQ. Interacts with RACK1; enhances RHOA activation. Interacts with PKP4; the interaction is detected at the midbody. Interacts (GTP-bound form preferentially) with PKN2; the interaction stimulates autophosphorylation and phosphorylation of PKN2. Interacts with ARHGDIA; this interaction inactivates and stabilizes RHOA. Interacts with ARHGDIB. Interacts (GTP-bound form) with KCNA2 (via cytoplasmic N-terminal domain) (By similarity). Interacts (GTP-bound form) with ECT2; the interaction results in allosteric activation of ECT2 (By similarity). Interacts with RAP1GDS1; the interaction is direct and in a 1:1 stoichiometry (By similarity).</text>
</comment>
<comment type="subcellular location">
    <subcellularLocation>
        <location evidence="2">Cell membrane</location>
        <topology evidence="2">Lipid-anchor</topology>
        <orientation evidence="2">Cytoplasmic side</orientation>
    </subcellularLocation>
    <subcellularLocation>
        <location evidence="2">Cytoplasm</location>
        <location evidence="2">Cytoskeleton</location>
    </subcellularLocation>
    <subcellularLocation>
        <location evidence="2">Cleavage furrow</location>
    </subcellularLocation>
    <subcellularLocation>
        <location evidence="2">Cytoplasm</location>
        <location evidence="2">Cell cortex</location>
    </subcellularLocation>
    <subcellularLocation>
        <location evidence="2">Midbody</location>
    </subcellularLocation>
    <subcellularLocation>
        <location evidence="5">Cell projection</location>
        <location evidence="5">Lamellipodium</location>
    </subcellularLocation>
    <subcellularLocation>
        <location evidence="5">Cell projection</location>
        <location evidence="5">Dendrite</location>
    </subcellularLocation>
    <subcellularLocation>
        <location evidence="2">Nucleus</location>
    </subcellularLocation>
    <subcellularLocation>
        <location evidence="2">Cytoplasm</location>
    </subcellularLocation>
    <text evidence="5">Localized to cell-cell contacts in calcium-treated keratinocytes (By similarity). Translocates to the equatorial region before furrow formation in a ECT2-dependent manner. Localizes to the equatorial cell cortex (at the site of the presumptive furrow) in early anaphase in an activated form and in a myosin- and actin-independent manner. Colocalizes with KANK1 at the contractile ring. Colocalizes with DAAM1 and KANK1 around centrosomes.</text>
</comment>
<comment type="PTM">
    <text evidence="2 5">Ubiquitinated by the BCR(KCTD13) and BCR(TNFAIP1) E3 ubiquitin ligase complexes, leading to its degradation by the proteasome, thereby regulating the actin cytoskeleton and synaptic transmission in neurons. Ubiquitinated at Lys-135 in a FBXL19-mediated manner; leading to proteasomal degradation.</text>
</comment>
<comment type="PTM">
    <text evidence="2 3">Phosphorylation by PRKG1 at Ser-188 inactivates RHOA signaling (By similarity). Phosphorylation by SLK at Ser-188 in response to AGTR2 activation (By similarity).</text>
</comment>
<comment type="PTM">
    <text evidence="5">Serotonylation of Gln-63 by TGM2 during activation and aggregation of platelets leads to constitutive activation of GTPase activity.</text>
</comment>
<comment type="similarity">
    <text evidence="7">Belongs to the small GTPase superfamily. Rho family.</text>
</comment>
<sequence>MAAIRKKLVIVGDGACGKTCLLIVFSKDQFPEVYVPTVFENYVADIEVDGKQVELALWDTAGQEDYDRLRPLSYPDTDVILMCFSIDSPDSLENIPEKWTPEVKHFCPNVPIILVGNKKDLRNDEHTRRELAKMKQEPVKPEEGRDMANRIGAFGYMECSAKTKDGVREVFEMATRAALQARRGKKKSGCLVL</sequence>